<evidence type="ECO:0000250" key="1"/>
<evidence type="ECO:0000305" key="2"/>
<comment type="similarity">
    <text evidence="2">Belongs to the bacterial ribosomal protein bL32 family.</text>
</comment>
<gene>
    <name type="primary">rpmF</name>
    <name type="ordered locus">RP773</name>
</gene>
<sequence>MAVPKKKTSKSKRNMRRSHLALGKINVIVDSHTGEYKLPHHISLVDGTYNNRQVVTKKIDTEEVA</sequence>
<name>RL32_RICPR</name>
<feature type="initiator methionine" description="Removed" evidence="1">
    <location>
        <position position="1"/>
    </location>
</feature>
<feature type="chain" id="PRO_0000172397" description="Large ribosomal subunit protein bL32">
    <location>
        <begin position="2"/>
        <end position="65"/>
    </location>
</feature>
<organism>
    <name type="scientific">Rickettsia prowazekii (strain Madrid E)</name>
    <dbReference type="NCBI Taxonomy" id="272947"/>
    <lineage>
        <taxon>Bacteria</taxon>
        <taxon>Pseudomonadati</taxon>
        <taxon>Pseudomonadota</taxon>
        <taxon>Alphaproteobacteria</taxon>
        <taxon>Rickettsiales</taxon>
        <taxon>Rickettsiaceae</taxon>
        <taxon>Rickettsieae</taxon>
        <taxon>Rickettsia</taxon>
        <taxon>typhus group</taxon>
    </lineage>
</organism>
<dbReference type="EMBL" id="AJ235273">
    <property type="protein sequence ID" value="CAA15200.1"/>
    <property type="molecule type" value="Genomic_DNA"/>
</dbReference>
<dbReference type="PIR" id="H71637">
    <property type="entry name" value="H71637"/>
</dbReference>
<dbReference type="RefSeq" id="NP_221124.1">
    <property type="nucleotide sequence ID" value="NC_000963.1"/>
</dbReference>
<dbReference type="RefSeq" id="WP_004596961.1">
    <property type="nucleotide sequence ID" value="NC_000963.1"/>
</dbReference>
<dbReference type="SMR" id="Q9ZCH0"/>
<dbReference type="STRING" id="272947.gene:17555843"/>
<dbReference type="EnsemblBacteria" id="CAA15200">
    <property type="protein sequence ID" value="CAA15200"/>
    <property type="gene ID" value="CAA15200"/>
</dbReference>
<dbReference type="GeneID" id="57569896"/>
<dbReference type="KEGG" id="rpr:RP773"/>
<dbReference type="PATRIC" id="fig|272947.5.peg.808"/>
<dbReference type="eggNOG" id="COG0333">
    <property type="taxonomic scope" value="Bacteria"/>
</dbReference>
<dbReference type="HOGENOM" id="CLU_129084_2_0_5"/>
<dbReference type="OrthoDB" id="9801927at2"/>
<dbReference type="Proteomes" id="UP000002480">
    <property type="component" value="Chromosome"/>
</dbReference>
<dbReference type="GO" id="GO:0015934">
    <property type="term" value="C:large ribosomal subunit"/>
    <property type="evidence" value="ECO:0007669"/>
    <property type="project" value="InterPro"/>
</dbReference>
<dbReference type="GO" id="GO:0003735">
    <property type="term" value="F:structural constituent of ribosome"/>
    <property type="evidence" value="ECO:0007669"/>
    <property type="project" value="InterPro"/>
</dbReference>
<dbReference type="GO" id="GO:0006412">
    <property type="term" value="P:translation"/>
    <property type="evidence" value="ECO:0007669"/>
    <property type="project" value="UniProtKB-UniRule"/>
</dbReference>
<dbReference type="FunFam" id="1.20.5.640:FF:000001">
    <property type="entry name" value="50S ribosomal protein L32"/>
    <property type="match status" value="1"/>
</dbReference>
<dbReference type="Gene3D" id="1.20.5.640">
    <property type="entry name" value="Single helix bin"/>
    <property type="match status" value="1"/>
</dbReference>
<dbReference type="HAMAP" id="MF_00340">
    <property type="entry name" value="Ribosomal_bL32"/>
    <property type="match status" value="1"/>
</dbReference>
<dbReference type="InterPro" id="IPR002677">
    <property type="entry name" value="Ribosomal_bL32"/>
</dbReference>
<dbReference type="InterPro" id="IPR044957">
    <property type="entry name" value="Ribosomal_bL32_bact"/>
</dbReference>
<dbReference type="InterPro" id="IPR011332">
    <property type="entry name" value="Ribosomal_zn-bd"/>
</dbReference>
<dbReference type="NCBIfam" id="TIGR01031">
    <property type="entry name" value="rpmF_bact"/>
    <property type="match status" value="1"/>
</dbReference>
<dbReference type="PANTHER" id="PTHR35534">
    <property type="entry name" value="50S RIBOSOMAL PROTEIN L32"/>
    <property type="match status" value="1"/>
</dbReference>
<dbReference type="PANTHER" id="PTHR35534:SF1">
    <property type="entry name" value="LARGE RIBOSOMAL SUBUNIT PROTEIN BL32"/>
    <property type="match status" value="1"/>
</dbReference>
<dbReference type="Pfam" id="PF01783">
    <property type="entry name" value="Ribosomal_L32p"/>
    <property type="match status" value="1"/>
</dbReference>
<dbReference type="SUPFAM" id="SSF57829">
    <property type="entry name" value="Zn-binding ribosomal proteins"/>
    <property type="match status" value="1"/>
</dbReference>
<accession>Q9ZCH0</accession>
<proteinExistence type="inferred from homology"/>
<protein>
    <recommendedName>
        <fullName evidence="2">Large ribosomal subunit protein bL32</fullName>
    </recommendedName>
    <alternativeName>
        <fullName>50S ribosomal protein L32</fullName>
    </alternativeName>
</protein>
<keyword id="KW-1185">Reference proteome</keyword>
<keyword id="KW-0687">Ribonucleoprotein</keyword>
<keyword id="KW-0689">Ribosomal protein</keyword>
<reference key="1">
    <citation type="journal article" date="1998" name="Nature">
        <title>The genome sequence of Rickettsia prowazekii and the origin of mitochondria.</title>
        <authorList>
            <person name="Andersson S.G.E."/>
            <person name="Zomorodipour A."/>
            <person name="Andersson J.O."/>
            <person name="Sicheritz-Ponten T."/>
            <person name="Alsmark U.C.M."/>
            <person name="Podowski R.M."/>
            <person name="Naeslund A.K."/>
            <person name="Eriksson A.-S."/>
            <person name="Winkler H.H."/>
            <person name="Kurland C.G."/>
        </authorList>
    </citation>
    <scope>NUCLEOTIDE SEQUENCE [LARGE SCALE GENOMIC DNA]</scope>
    <source>
        <strain>Madrid E</strain>
    </source>
</reference>